<protein>
    <recommendedName>
        <fullName evidence="1">Matrix protein 1</fullName>
        <shortName evidence="1">M1</shortName>
    </recommendedName>
</protein>
<accession>Q67181</accession>
<evidence type="ECO:0000255" key="1">
    <source>
        <dbReference type="HAMAP-Rule" id="MF_04068"/>
    </source>
</evidence>
<dbReference type="EMBL" id="M63516">
    <property type="protein sequence ID" value="AAA43307.1"/>
    <property type="molecule type" value="Genomic_RNA"/>
</dbReference>
<dbReference type="SMR" id="Q67181"/>
<dbReference type="Proteomes" id="UP000149784">
    <property type="component" value="Genome"/>
</dbReference>
<dbReference type="GO" id="GO:0042025">
    <property type="term" value="C:host cell nucleus"/>
    <property type="evidence" value="ECO:0007669"/>
    <property type="project" value="UniProtKB-SubCell"/>
</dbReference>
<dbReference type="GO" id="GO:0016020">
    <property type="term" value="C:membrane"/>
    <property type="evidence" value="ECO:0007669"/>
    <property type="project" value="UniProtKB-KW"/>
</dbReference>
<dbReference type="GO" id="GO:0055036">
    <property type="term" value="C:virion membrane"/>
    <property type="evidence" value="ECO:0007669"/>
    <property type="project" value="UniProtKB-SubCell"/>
</dbReference>
<dbReference type="GO" id="GO:0003723">
    <property type="term" value="F:RNA binding"/>
    <property type="evidence" value="ECO:0007669"/>
    <property type="project" value="UniProtKB-UniRule"/>
</dbReference>
<dbReference type="GO" id="GO:0039660">
    <property type="term" value="F:structural constituent of virion"/>
    <property type="evidence" value="ECO:0007669"/>
    <property type="project" value="UniProtKB-UniRule"/>
</dbReference>
<dbReference type="GO" id="GO:0046761">
    <property type="term" value="P:viral budding from plasma membrane"/>
    <property type="evidence" value="ECO:0007669"/>
    <property type="project" value="UniProtKB-UniRule"/>
</dbReference>
<dbReference type="FunFam" id="1.10.10.180:FF:000001">
    <property type="entry name" value="Matrix protein 1"/>
    <property type="match status" value="1"/>
</dbReference>
<dbReference type="FunFam" id="1.20.91.10:FF:000001">
    <property type="entry name" value="Matrix protein 1"/>
    <property type="match status" value="1"/>
</dbReference>
<dbReference type="Gene3D" id="1.10.10.180">
    <property type="match status" value="1"/>
</dbReference>
<dbReference type="Gene3D" id="1.20.91.10">
    <property type="match status" value="1"/>
</dbReference>
<dbReference type="HAMAP" id="MF_04068">
    <property type="entry name" value="INFV_M1"/>
    <property type="match status" value="1"/>
</dbReference>
<dbReference type="InterPro" id="IPR036039">
    <property type="entry name" value="Flu_matrix_M1"/>
</dbReference>
<dbReference type="InterPro" id="IPR013188">
    <property type="entry name" value="Flu_matrix_M1_C"/>
</dbReference>
<dbReference type="InterPro" id="IPR001561">
    <property type="entry name" value="Flu_matrix_M1_N"/>
</dbReference>
<dbReference type="InterPro" id="IPR015423">
    <property type="entry name" value="Flu_matrix_M1_N_sub1"/>
</dbReference>
<dbReference type="InterPro" id="IPR015799">
    <property type="entry name" value="Flu_matrix_M1_N_sub2"/>
</dbReference>
<dbReference type="InterPro" id="IPR037533">
    <property type="entry name" value="INFV_M1"/>
</dbReference>
<dbReference type="Pfam" id="PF00598">
    <property type="entry name" value="Flu_M1"/>
    <property type="match status" value="1"/>
</dbReference>
<dbReference type="Pfam" id="PF08289">
    <property type="entry name" value="Flu_M1_C"/>
    <property type="match status" value="1"/>
</dbReference>
<dbReference type="SMART" id="SM00759">
    <property type="entry name" value="Flu_M1_C"/>
    <property type="match status" value="1"/>
</dbReference>
<dbReference type="SUPFAM" id="SSF48145">
    <property type="entry name" value="Influenza virus matrix protein M1"/>
    <property type="match status" value="1"/>
</dbReference>
<gene>
    <name evidence="1" type="primary">M</name>
</gene>
<reference key="1">
    <citation type="journal article" date="1991" name="J. Virol.">
        <title>Evolutionary analysis of the influenza A virus M gene with comparison of the M1 and M2 proteins.</title>
        <authorList>
            <person name="Ito T."/>
            <person name="Gorman O.T."/>
            <person name="Kawaoka Y."/>
            <person name="Bean W.J."/>
            <person name="Webster R.G."/>
        </authorList>
    </citation>
    <scope>NUCLEOTIDE SEQUENCE [GENOMIC RNA]</scope>
</reference>
<name>M1_I88A3</name>
<proteinExistence type="inferred from homology"/>
<keyword id="KW-0025">Alternative splicing</keyword>
<keyword id="KW-1048">Host nucleus</keyword>
<keyword id="KW-0472">Membrane</keyword>
<keyword id="KW-0694">RNA-binding</keyword>
<keyword id="KW-0468">Viral matrix protein</keyword>
<keyword id="KW-0946">Virion</keyword>
<sequence>MSLLTEVETYVLSIVPSGPLKAEIAQRLEDVFAGKNTDLEALMEWLKTRPILSPLTKGILGFVFTLTVPSERGLQRRRFVQNALNGNGDPNNMDRAVKLYRKLKREITFHGAKEIALSYSAGALASCMGLIYNRMGAVTTEVAFGLVCATCEQIADSQHRSHRQMVATTNPLIRHENRMVLASTTAKAMEQMAGSSEQAAEAMEIASQARQMVQAMRAIGTHPSSSAGLKDDLLENLQTYQKRMGVQVQRFK</sequence>
<feature type="chain" id="PRO_0000326327" description="Matrix protein 1">
    <location>
        <begin position="1"/>
        <end position="252"/>
    </location>
</feature>
<feature type="region of interest" description="Membrane-binding" evidence="1">
    <location>
        <begin position="1"/>
        <end position="164"/>
    </location>
</feature>
<feature type="region of interest" description="RNP-binding" evidence="1">
    <location>
        <begin position="165"/>
        <end position="252"/>
    </location>
</feature>
<feature type="short sequence motif" description="Nuclear localization signal" evidence="1">
    <location>
        <begin position="101"/>
        <end position="105"/>
    </location>
</feature>
<organism>
    <name type="scientific">Influenza A virus (strain A/Memphis/8/1988 H3N2)</name>
    <dbReference type="NCBI Taxonomy" id="383588"/>
    <lineage>
        <taxon>Viruses</taxon>
        <taxon>Riboviria</taxon>
        <taxon>Orthornavirae</taxon>
        <taxon>Negarnaviricota</taxon>
        <taxon>Polyploviricotina</taxon>
        <taxon>Insthoviricetes</taxon>
        <taxon>Articulavirales</taxon>
        <taxon>Orthomyxoviridae</taxon>
        <taxon>Alphainfluenzavirus</taxon>
        <taxon>Alphainfluenzavirus influenzae</taxon>
        <taxon>Influenza A virus</taxon>
    </lineage>
</organism>
<comment type="function">
    <text evidence="1">Plays critical roles in virus replication, from virus entry and uncoating to assembly and budding of the virus particle. M1 binding to ribonucleocapsids (RNPs) in nucleus seems to inhibit viral transcription. Interaction of viral NEP with M1-RNP is thought to promote nuclear export of the complex, which is targeted to the virion assembly site at the apical plasma membrane in polarized epithelial cells. Interactions with NA and HA may bring M1, a non-raft-associated protein, into lipid rafts. Forms a continuous shell on the inner side of the lipid bilayer in virion, where it binds the RNP. During virus entry into cell, the M2 ion channel acidifies the internal virion core, inducing M1 dissociation from the RNP. M1-free RNPs are transported to the nucleus, where viral transcription and replication can take place.</text>
</comment>
<comment type="function">
    <text evidence="1">Determines the virion's shape: spherical or filamentous. Clinical isolates of influenza are characterized by the presence of significant proportion of filamentous virions, whereas after multiple passage on eggs or cell culture, virions have only spherical morphology. Filamentous virions are thought to be important to infect neighboring cells, and spherical virions more suited to spread through aerosol between hosts organisms.</text>
</comment>
<comment type="subunit">
    <text evidence="1">Homodimer and homomultimer. Interacts with NEP. Binds ribonucleocapsid by both interacting with genomic RNA and NP protein. May interact with HA and NA. Cannot bind NP without genomic RNA.</text>
</comment>
<comment type="subcellular location">
    <subcellularLocation>
        <location evidence="1">Virion membrane</location>
        <topology evidence="1">Peripheral membrane protein</topology>
        <orientation evidence="1">Cytoplasmic side</orientation>
    </subcellularLocation>
    <subcellularLocation>
        <location evidence="1">Host nucleus</location>
    </subcellularLocation>
</comment>
<comment type="alternative products">
    <event type="alternative splicing"/>
    <isoform>
        <id>Q67181-1</id>
        <name>M1</name>
        <sequence type="displayed"/>
    </isoform>
    <isoform>
        <id>Q76V11-1</id>
        <name>M2</name>
        <sequence type="external"/>
    </isoform>
    <text>Only the first 9 residues are shared by the 2 isoforms.</text>
</comment>
<comment type="miscellaneous">
    <text evidence="1">Most abundant protein in virion. When expressed alone can form virus-like particles in transfected cells.</text>
</comment>
<comment type="similarity">
    <text evidence="1">Belongs to the influenza viruses Matrix protein M1 family.</text>
</comment>
<organismHost>
    <name type="scientific">Aves</name>
    <dbReference type="NCBI Taxonomy" id="8782"/>
</organismHost>
<organismHost>
    <name type="scientific">Cetacea</name>
    <name type="common">whales</name>
    <dbReference type="NCBI Taxonomy" id="9721"/>
</organismHost>
<organismHost>
    <name type="scientific">Homo sapiens</name>
    <name type="common">Human</name>
    <dbReference type="NCBI Taxonomy" id="9606"/>
</organismHost>
<organismHost>
    <name type="scientific">Phocidae</name>
    <name type="common">true seals</name>
    <dbReference type="NCBI Taxonomy" id="9709"/>
</organismHost>
<organismHost>
    <name type="scientific">Sus scrofa</name>
    <name type="common">Pig</name>
    <dbReference type="NCBI Taxonomy" id="9823"/>
</organismHost>